<dbReference type="EMBL" id="CP001014">
    <property type="protein sequence ID" value="ACB39687.1"/>
    <property type="molecule type" value="Genomic_DNA"/>
</dbReference>
<dbReference type="RefSeq" id="WP_012350107.1">
    <property type="nucleotide sequence ID" value="NC_010525.1"/>
</dbReference>
<dbReference type="SMR" id="B1YD24"/>
<dbReference type="STRING" id="444157.Tneu_0748"/>
<dbReference type="GeneID" id="6165103"/>
<dbReference type="KEGG" id="tne:Tneu_0748"/>
<dbReference type="eggNOG" id="arCOG04098">
    <property type="taxonomic scope" value="Archaea"/>
</dbReference>
<dbReference type="HOGENOM" id="CLU_083987_0_2_2"/>
<dbReference type="OrthoDB" id="314984at2157"/>
<dbReference type="Proteomes" id="UP000001694">
    <property type="component" value="Chromosome"/>
</dbReference>
<dbReference type="GO" id="GO:0022625">
    <property type="term" value="C:cytosolic large ribosomal subunit"/>
    <property type="evidence" value="ECO:0007669"/>
    <property type="project" value="TreeGrafter"/>
</dbReference>
<dbReference type="GO" id="GO:0019843">
    <property type="term" value="F:rRNA binding"/>
    <property type="evidence" value="ECO:0007669"/>
    <property type="project" value="UniProtKB-UniRule"/>
</dbReference>
<dbReference type="GO" id="GO:0003735">
    <property type="term" value="F:structural constituent of ribosome"/>
    <property type="evidence" value="ECO:0007669"/>
    <property type="project" value="InterPro"/>
</dbReference>
<dbReference type="GO" id="GO:0002181">
    <property type="term" value="P:cytoplasmic translation"/>
    <property type="evidence" value="ECO:0007669"/>
    <property type="project" value="TreeGrafter"/>
</dbReference>
<dbReference type="CDD" id="cd00336">
    <property type="entry name" value="Ribosomal_L22"/>
    <property type="match status" value="1"/>
</dbReference>
<dbReference type="Gene3D" id="3.90.470.10">
    <property type="entry name" value="Ribosomal protein L22/L17"/>
    <property type="match status" value="1"/>
</dbReference>
<dbReference type="HAMAP" id="MF_01331_A">
    <property type="entry name" value="Ribosomal_uL22_A"/>
    <property type="match status" value="1"/>
</dbReference>
<dbReference type="InterPro" id="IPR001063">
    <property type="entry name" value="Ribosomal_uL22"/>
</dbReference>
<dbReference type="InterPro" id="IPR005721">
    <property type="entry name" value="Ribosomal_uL22_euk/arc"/>
</dbReference>
<dbReference type="InterPro" id="IPR036394">
    <property type="entry name" value="Ribosomal_uL22_sf"/>
</dbReference>
<dbReference type="NCBIfam" id="NF003260">
    <property type="entry name" value="PRK04223.1"/>
    <property type="match status" value="1"/>
</dbReference>
<dbReference type="NCBIfam" id="TIGR01038">
    <property type="entry name" value="uL22_arch_euk"/>
    <property type="match status" value="1"/>
</dbReference>
<dbReference type="PANTHER" id="PTHR11593">
    <property type="entry name" value="60S RIBOSOMAL PROTEIN L17"/>
    <property type="match status" value="1"/>
</dbReference>
<dbReference type="PANTHER" id="PTHR11593:SF10">
    <property type="entry name" value="60S RIBOSOMAL PROTEIN L17"/>
    <property type="match status" value="1"/>
</dbReference>
<dbReference type="Pfam" id="PF00237">
    <property type="entry name" value="Ribosomal_L22"/>
    <property type="match status" value="1"/>
</dbReference>
<dbReference type="SUPFAM" id="SSF54843">
    <property type="entry name" value="Ribosomal protein L22"/>
    <property type="match status" value="1"/>
</dbReference>
<proteinExistence type="inferred from homology"/>
<feature type="chain" id="PRO_0000354550" description="Large ribosomal subunit protein uL22">
    <location>
        <begin position="1"/>
        <end position="185"/>
    </location>
</feature>
<name>RL22_PYRNV</name>
<evidence type="ECO:0000255" key="1">
    <source>
        <dbReference type="HAMAP-Rule" id="MF_01331"/>
    </source>
</evidence>
<evidence type="ECO:0000305" key="2"/>
<gene>
    <name evidence="1" type="primary">rpl22</name>
    <name type="ordered locus">Tneu_0748</name>
</gene>
<reference key="1">
    <citation type="submission" date="2008-03" db="EMBL/GenBank/DDBJ databases">
        <title>Complete sequence of Thermoproteus neutrophilus V24Sta.</title>
        <authorList>
            <consortium name="US DOE Joint Genome Institute"/>
            <person name="Copeland A."/>
            <person name="Lucas S."/>
            <person name="Lapidus A."/>
            <person name="Glavina del Rio T."/>
            <person name="Dalin E."/>
            <person name="Tice H."/>
            <person name="Bruce D."/>
            <person name="Goodwin L."/>
            <person name="Pitluck S."/>
            <person name="Sims D."/>
            <person name="Brettin T."/>
            <person name="Detter J.C."/>
            <person name="Han C."/>
            <person name="Kuske C.R."/>
            <person name="Schmutz J."/>
            <person name="Larimer F."/>
            <person name="Land M."/>
            <person name="Hauser L."/>
            <person name="Kyrpides N."/>
            <person name="Mikhailova N."/>
            <person name="Biddle J.F."/>
            <person name="Zhang Z."/>
            <person name="Fitz-Gibbon S.T."/>
            <person name="Lowe T.M."/>
            <person name="Saltikov C."/>
            <person name="House C.H."/>
            <person name="Richardson P."/>
        </authorList>
    </citation>
    <scope>NUCLEOTIDE SEQUENCE [LARGE SCALE GENOMIC DNA]</scope>
    <source>
        <strain>DSM 2338 / JCM 9278 / NBRC 100436 / V24Sta</strain>
    </source>
</reference>
<protein>
    <recommendedName>
        <fullName evidence="1">Large ribosomal subunit protein uL22</fullName>
    </recommendedName>
    <alternativeName>
        <fullName evidence="2">50S ribosomal protein L22</fullName>
    </alternativeName>
</protein>
<sequence>MPRHQNYSLSDEAAVQLVFRKYGVKVSAEQIAKAYAPEQKMSWKKSVEVARFIEGMTLRQAKSWLEDVVKMKRPIPIRTFKKKQAHHATPWSGWPVAKWPVKVARRFLDLLENLENNARFRGLDVERVVIVHAAAHKGYRIHNIMPRAFGRATRFDEQTVNVEVIAAELPQQVVPKRYRLNLVKR</sequence>
<comment type="function">
    <text evidence="1">This protein binds specifically to 23S rRNA. It makes multiple contacts with different domains of the 23S rRNA in the assembled 50S subunit and ribosome.</text>
</comment>
<comment type="function">
    <text evidence="1">The globular domain of the protein is located near the polypeptide exit tunnel on the outside of the subunit, while an extended beta-hairpin is found that lines the wall of the exit tunnel in the center of the 70S ribosome.</text>
</comment>
<comment type="subunit">
    <text evidence="1">Part of the 50S ribosomal subunit.</text>
</comment>
<comment type="similarity">
    <text evidence="1">Belongs to the universal ribosomal protein uL22 family.</text>
</comment>
<keyword id="KW-0687">Ribonucleoprotein</keyword>
<keyword id="KW-0689">Ribosomal protein</keyword>
<keyword id="KW-0694">RNA-binding</keyword>
<keyword id="KW-0699">rRNA-binding</keyword>
<organism>
    <name type="scientific">Pyrobaculum neutrophilum (strain DSM 2338 / JCM 9278 / NBRC 100436 / V24Sta)</name>
    <name type="common">Thermoproteus neutrophilus</name>
    <dbReference type="NCBI Taxonomy" id="444157"/>
    <lineage>
        <taxon>Archaea</taxon>
        <taxon>Thermoproteota</taxon>
        <taxon>Thermoprotei</taxon>
        <taxon>Thermoproteales</taxon>
        <taxon>Thermoproteaceae</taxon>
        <taxon>Pyrobaculum</taxon>
    </lineage>
</organism>
<accession>B1YD24</accession>